<sequence>MKKHLLALGLLLVGVSPAQALDVGDISSFMNSGSSTLSKTIKNSTDSGRLINIHLERLSSPLDGGQVIPMDKPDEVLLTPASLLLPAQASDVIRFFYKGPADDKERYYRIVWFDQALSDAQRDNANRSAVATASARIGTILVVAPRQVNYRFQYANGSLTNTGNATLRILAYGPCLKAADGKECKENYYLMPGKSRRFTQVDTANKKGRVALWQGEQFVPVK</sequence>
<proteinExistence type="inferred from homology"/>
<feature type="signal peptide" evidence="2">
    <location>
        <begin position="1"/>
        <end position="20"/>
    </location>
</feature>
<feature type="chain" id="PRO_0000369168" description="Probable fimbrial chaperone EcpB">
    <location>
        <begin position="21"/>
        <end position="222"/>
    </location>
</feature>
<evidence type="ECO:0000250" key="1"/>
<evidence type="ECO:0000255" key="2"/>
<evidence type="ECO:0000305" key="3"/>
<gene>
    <name type="primary">ecpB</name>
    <name type="synonym">matC</name>
    <name type="ordered locus">KPK_4398</name>
</gene>
<dbReference type="EMBL" id="CP000964">
    <property type="protein sequence ID" value="ACI10785.1"/>
    <property type="molecule type" value="Genomic_DNA"/>
</dbReference>
<dbReference type="SMR" id="B5Y157"/>
<dbReference type="KEGG" id="kpe:KPK_4398"/>
<dbReference type="HOGENOM" id="CLU_106652_0_0_6"/>
<dbReference type="Proteomes" id="UP000001734">
    <property type="component" value="Chromosome"/>
</dbReference>
<dbReference type="Gene3D" id="2.60.40.10">
    <property type="entry name" value="Immunoglobulins"/>
    <property type="match status" value="1"/>
</dbReference>
<dbReference type="InterPro" id="IPR040695">
    <property type="entry name" value="EcpB_C"/>
</dbReference>
<dbReference type="InterPro" id="IPR013783">
    <property type="entry name" value="Ig-like_fold"/>
</dbReference>
<dbReference type="InterPro" id="IPR008962">
    <property type="entry name" value="PapD-like_sf"/>
</dbReference>
<dbReference type="Pfam" id="PF18649">
    <property type="entry name" value="EcpB_C"/>
    <property type="match status" value="1"/>
</dbReference>
<dbReference type="SUPFAM" id="SSF49354">
    <property type="entry name" value="PapD-like"/>
    <property type="match status" value="1"/>
</dbReference>
<name>ECPB_KLEP3</name>
<reference key="1">
    <citation type="journal article" date="2008" name="PLoS Genet.">
        <title>Complete genome sequence of the N2-fixing broad host range endophyte Klebsiella pneumoniae 342 and virulence predictions verified in mice.</title>
        <authorList>
            <person name="Fouts D.E."/>
            <person name="Tyler H.L."/>
            <person name="DeBoy R.T."/>
            <person name="Daugherty S."/>
            <person name="Ren Q."/>
            <person name="Badger J.H."/>
            <person name="Durkin A.S."/>
            <person name="Huot H."/>
            <person name="Shrivastava S."/>
            <person name="Kothari S."/>
            <person name="Dodson R.J."/>
            <person name="Mohamoud Y."/>
            <person name="Khouri H."/>
            <person name="Roesch L.F.W."/>
            <person name="Krogfelt K.A."/>
            <person name="Struve C."/>
            <person name="Triplett E.W."/>
            <person name="Methe B.A."/>
        </authorList>
    </citation>
    <scope>NUCLEOTIDE SEQUENCE [LARGE SCALE GENOMIC DNA]</scope>
    <source>
        <strain>342</strain>
    </source>
</reference>
<comment type="function">
    <text evidence="1">Part of the ecpRABCDE operon, which encodes the E.coli common pilus (ECP). ECP plays a dual role in early-stage biofilm development and host cell recognition (By similarity).</text>
</comment>
<comment type="induction">
    <text evidence="1">Positively regulated by EcpR.</text>
</comment>
<comment type="similarity">
    <text evidence="3">Belongs to the EcpB/EcpE family.</text>
</comment>
<keyword id="KW-0143">Chaperone</keyword>
<keyword id="KW-1029">Fimbrium biogenesis</keyword>
<keyword id="KW-0732">Signal</keyword>
<organism>
    <name type="scientific">Klebsiella pneumoniae (strain 342)</name>
    <dbReference type="NCBI Taxonomy" id="507522"/>
    <lineage>
        <taxon>Bacteria</taxon>
        <taxon>Pseudomonadati</taxon>
        <taxon>Pseudomonadota</taxon>
        <taxon>Gammaproteobacteria</taxon>
        <taxon>Enterobacterales</taxon>
        <taxon>Enterobacteriaceae</taxon>
        <taxon>Klebsiella/Raoultella group</taxon>
        <taxon>Klebsiella</taxon>
        <taxon>Klebsiella pneumoniae complex</taxon>
    </lineage>
</organism>
<accession>B5Y157</accession>
<protein>
    <recommendedName>
        <fullName>Probable fimbrial chaperone EcpB</fullName>
    </recommendedName>
</protein>